<reference key="1">
    <citation type="journal article" date="2006" name="Proc. Natl. Acad. Sci. U.S.A.">
        <title>Identification of genes subject to positive selection in uropathogenic strains of Escherichia coli: a comparative genomics approach.</title>
        <authorList>
            <person name="Chen S.L."/>
            <person name="Hung C.-S."/>
            <person name="Xu J."/>
            <person name="Reigstad C.S."/>
            <person name="Magrini V."/>
            <person name="Sabo A."/>
            <person name="Blasiar D."/>
            <person name="Bieri T."/>
            <person name="Meyer R.R."/>
            <person name="Ozersky P."/>
            <person name="Armstrong J.R."/>
            <person name="Fulton R.S."/>
            <person name="Latreille J.P."/>
            <person name="Spieth J."/>
            <person name="Hooton T.M."/>
            <person name="Mardis E.R."/>
            <person name="Hultgren S.J."/>
            <person name="Gordon J.I."/>
        </authorList>
    </citation>
    <scope>NUCLEOTIDE SEQUENCE [LARGE SCALE GENOMIC DNA]</scope>
    <source>
        <strain>UTI89 / UPEC</strain>
    </source>
</reference>
<comment type="function">
    <text evidence="1">Involved in the import of threonine and serine into the cell, with the concomitant import of a proton (symport system).</text>
</comment>
<comment type="catalytic activity">
    <reaction evidence="1">
        <text>L-threonine(in) + H(+)(in) = L-threonine(out) + H(+)(out)</text>
        <dbReference type="Rhea" id="RHEA:28883"/>
        <dbReference type="ChEBI" id="CHEBI:15378"/>
        <dbReference type="ChEBI" id="CHEBI:57926"/>
    </reaction>
    <physiologicalReaction direction="right-to-left" evidence="1">
        <dbReference type="Rhea" id="RHEA:28885"/>
    </physiologicalReaction>
</comment>
<comment type="catalytic activity">
    <reaction evidence="1">
        <text>L-serine(in) + H(+)(in) = L-serine(out) + H(+)(out)</text>
        <dbReference type="Rhea" id="RHEA:28887"/>
        <dbReference type="ChEBI" id="CHEBI:15378"/>
        <dbReference type="ChEBI" id="CHEBI:33384"/>
    </reaction>
    <physiologicalReaction direction="right-to-left" evidence="1">
        <dbReference type="Rhea" id="RHEA:28889"/>
    </physiologicalReaction>
</comment>
<comment type="subcellular location">
    <subcellularLocation>
        <location evidence="1">Cell inner membrane</location>
        <topology evidence="1">Multi-pass membrane protein</topology>
    </subcellularLocation>
</comment>
<comment type="similarity">
    <text evidence="1">Belongs to the amino acid/polyamine transporter 2 family. SdaC/TdcC subfamily.</text>
</comment>
<keyword id="KW-0029">Amino-acid transport</keyword>
<keyword id="KW-0997">Cell inner membrane</keyword>
<keyword id="KW-1003">Cell membrane</keyword>
<keyword id="KW-0472">Membrane</keyword>
<keyword id="KW-0769">Symport</keyword>
<keyword id="KW-0812">Transmembrane</keyword>
<keyword id="KW-1133">Transmembrane helix</keyword>
<keyword id="KW-0813">Transport</keyword>
<dbReference type="EMBL" id="CP000243">
    <property type="protein sequence ID" value="ABE08997.1"/>
    <property type="molecule type" value="Genomic_DNA"/>
</dbReference>
<dbReference type="RefSeq" id="WP_000107720.1">
    <property type="nucleotide sequence ID" value="NZ_CP064825.1"/>
</dbReference>
<dbReference type="SMR" id="Q1R6L7"/>
<dbReference type="GeneID" id="75205075"/>
<dbReference type="KEGG" id="eci:UTI89_C3551"/>
<dbReference type="HOGENOM" id="CLU_052043_1_1_6"/>
<dbReference type="Proteomes" id="UP000001952">
    <property type="component" value="Chromosome"/>
</dbReference>
<dbReference type="GO" id="GO:0005886">
    <property type="term" value="C:plasma membrane"/>
    <property type="evidence" value="ECO:0007669"/>
    <property type="project" value="UniProtKB-SubCell"/>
</dbReference>
<dbReference type="GO" id="GO:0015194">
    <property type="term" value="F:L-serine transmembrane transporter activity"/>
    <property type="evidence" value="ECO:0007669"/>
    <property type="project" value="InterPro"/>
</dbReference>
<dbReference type="GO" id="GO:0015293">
    <property type="term" value="F:symporter activity"/>
    <property type="evidence" value="ECO:0007669"/>
    <property type="project" value="UniProtKB-UniRule"/>
</dbReference>
<dbReference type="GO" id="GO:0015565">
    <property type="term" value="F:threonine efflux transmembrane transporter activity"/>
    <property type="evidence" value="ECO:0007669"/>
    <property type="project" value="InterPro"/>
</dbReference>
<dbReference type="HAMAP" id="MF_01583">
    <property type="entry name" value="Thr_Ser_transp_TdcC"/>
    <property type="match status" value="1"/>
</dbReference>
<dbReference type="InterPro" id="IPR018227">
    <property type="entry name" value="Amino_acid_transport_2"/>
</dbReference>
<dbReference type="InterPro" id="IPR004694">
    <property type="entry name" value="Hydroxy_aa_transpt"/>
</dbReference>
<dbReference type="InterPro" id="IPR023726">
    <property type="entry name" value="Thr/Ser_transpt_TdcC"/>
</dbReference>
<dbReference type="NCBIfam" id="NF010152">
    <property type="entry name" value="PRK13629.1"/>
    <property type="match status" value="1"/>
</dbReference>
<dbReference type="NCBIfam" id="TIGR00814">
    <property type="entry name" value="stp"/>
    <property type="match status" value="1"/>
</dbReference>
<dbReference type="PANTHER" id="PTHR35334">
    <property type="entry name" value="SERINE TRANSPORTER"/>
    <property type="match status" value="1"/>
</dbReference>
<dbReference type="PANTHER" id="PTHR35334:SF1">
    <property type="entry name" value="THREONINE_SERINE TRANSPORTER TDCC"/>
    <property type="match status" value="1"/>
</dbReference>
<dbReference type="Pfam" id="PF03222">
    <property type="entry name" value="Trp_Tyr_perm"/>
    <property type="match status" value="1"/>
</dbReference>
<gene>
    <name evidence="1" type="primary">tdcC</name>
    <name type="ordered locus">UTI89_C3551</name>
</gene>
<evidence type="ECO:0000255" key="1">
    <source>
        <dbReference type="HAMAP-Rule" id="MF_01583"/>
    </source>
</evidence>
<accession>Q1R6L7</accession>
<feature type="chain" id="PRO_0000309164" description="Threonine/serine transporter TdcC">
    <location>
        <begin position="1"/>
        <end position="443"/>
    </location>
</feature>
<feature type="transmembrane region" description="Helical" evidence="1">
    <location>
        <begin position="22"/>
        <end position="42"/>
    </location>
</feature>
<feature type="transmembrane region" description="Helical" evidence="1">
    <location>
        <begin position="44"/>
        <end position="64"/>
    </location>
</feature>
<feature type="transmembrane region" description="Helical" evidence="1">
    <location>
        <begin position="97"/>
        <end position="117"/>
    </location>
</feature>
<feature type="transmembrane region" description="Helical" evidence="1">
    <location>
        <begin position="140"/>
        <end position="160"/>
    </location>
</feature>
<feature type="transmembrane region" description="Helical" evidence="1">
    <location>
        <begin position="163"/>
        <end position="183"/>
    </location>
</feature>
<feature type="transmembrane region" description="Helical" evidence="1">
    <location>
        <begin position="207"/>
        <end position="227"/>
    </location>
</feature>
<feature type="transmembrane region" description="Helical" evidence="1">
    <location>
        <begin position="261"/>
        <end position="281"/>
    </location>
</feature>
<feature type="transmembrane region" description="Helical" evidence="1">
    <location>
        <begin position="311"/>
        <end position="331"/>
    </location>
</feature>
<feature type="transmembrane region" description="Helical" evidence="1">
    <location>
        <begin position="366"/>
        <end position="386"/>
    </location>
</feature>
<feature type="transmembrane region" description="Helical" evidence="1">
    <location>
        <begin position="389"/>
        <end position="409"/>
    </location>
</feature>
<feature type="transmembrane region" description="Helical" evidence="1">
    <location>
        <begin position="423"/>
        <end position="443"/>
    </location>
</feature>
<name>TDCC_ECOUT</name>
<sequence>MSTSDSIVSSQTKQSSWRKSDTTWTLGLFGTAIGAGVLFFPIRAGFGGLIPILLMLVLAYPIAFYCHRALARLCLSGSNPSGNITETVEEHFGKTGGVVITFLYFFAICPLLWIYGVTITNTFMTFWENQLGFAPLNRGFVALFLLLLMAFVIWFGKDLMVKVMSYLVWPFIASLVLISLSLIPYWNSAVIDQVDLGSLSLTGHDGILITVWLGISIMVFSFNFSPIVSSFVVSKREEYEKDFGRDFTERKCSQIISRASMLMVAVVMFFAFSCLFTLSPANMAEAKAQNIPVLSYLANHFASMTGTKTTFAITLEYAASIIALVAIFKSFFGHYLGTLEGLNGLILKFGYKGDKTKVSLGKLNTISMIFIMGSTWVVAYANPNILDLIEAMGAPIIASLLCLLPMYAIRKAPSLAKYRGRLDNVFVTVIGLLTILNIVYKLF</sequence>
<protein>
    <recommendedName>
        <fullName evidence="1">Threonine/serine transporter TdcC</fullName>
    </recommendedName>
    <alternativeName>
        <fullName evidence="1">H(+)/threonine-serine symporter</fullName>
    </alternativeName>
</protein>
<organism>
    <name type="scientific">Escherichia coli (strain UTI89 / UPEC)</name>
    <dbReference type="NCBI Taxonomy" id="364106"/>
    <lineage>
        <taxon>Bacteria</taxon>
        <taxon>Pseudomonadati</taxon>
        <taxon>Pseudomonadota</taxon>
        <taxon>Gammaproteobacteria</taxon>
        <taxon>Enterobacterales</taxon>
        <taxon>Enterobacteriaceae</taxon>
        <taxon>Escherichia</taxon>
    </lineage>
</organism>
<proteinExistence type="inferred from homology"/>